<evidence type="ECO:0000255" key="1">
    <source>
        <dbReference type="HAMAP-Rule" id="MF_00672"/>
    </source>
</evidence>
<keyword id="KW-0997">Cell inner membrane</keyword>
<keyword id="KW-1003">Cell membrane</keyword>
<keyword id="KW-0472">Membrane</keyword>
<keyword id="KW-0812">Transmembrane</keyword>
<keyword id="KW-1133">Transmembrane helix</keyword>
<accession>A9KXA4</accession>
<reference key="1">
    <citation type="submission" date="2007-11" db="EMBL/GenBank/DDBJ databases">
        <title>Complete sequence of chromosome of Shewanella baltica OS195.</title>
        <authorList>
            <consortium name="US DOE Joint Genome Institute"/>
            <person name="Copeland A."/>
            <person name="Lucas S."/>
            <person name="Lapidus A."/>
            <person name="Barry K."/>
            <person name="Glavina del Rio T."/>
            <person name="Dalin E."/>
            <person name="Tice H."/>
            <person name="Pitluck S."/>
            <person name="Chain P."/>
            <person name="Malfatti S."/>
            <person name="Shin M."/>
            <person name="Vergez L."/>
            <person name="Schmutz J."/>
            <person name="Larimer F."/>
            <person name="Land M."/>
            <person name="Hauser L."/>
            <person name="Kyrpides N."/>
            <person name="Kim E."/>
            <person name="Brettar I."/>
            <person name="Rodrigues J."/>
            <person name="Konstantinidis K."/>
            <person name="Klappenbach J."/>
            <person name="Hofle M."/>
            <person name="Tiedje J."/>
            <person name="Richardson P."/>
        </authorList>
    </citation>
    <scope>NUCLEOTIDE SEQUENCE [LARGE SCALE GENOMIC DNA]</scope>
    <source>
        <strain>OS195</strain>
    </source>
</reference>
<dbReference type="EMBL" id="CP000891">
    <property type="protein sequence ID" value="ABX47500.1"/>
    <property type="molecule type" value="Genomic_DNA"/>
</dbReference>
<dbReference type="RefSeq" id="WP_006086585.1">
    <property type="nucleotide sequence ID" value="NC_009997.1"/>
</dbReference>
<dbReference type="KEGG" id="sbn:Sbal195_0319"/>
<dbReference type="HOGENOM" id="CLU_032288_0_0_6"/>
<dbReference type="Proteomes" id="UP000000770">
    <property type="component" value="Chromosome"/>
</dbReference>
<dbReference type="GO" id="GO:0005886">
    <property type="term" value="C:plasma membrane"/>
    <property type="evidence" value="ECO:0007669"/>
    <property type="project" value="UniProtKB-SubCell"/>
</dbReference>
<dbReference type="HAMAP" id="MF_00672">
    <property type="entry name" value="UPF0761"/>
    <property type="match status" value="1"/>
</dbReference>
<dbReference type="InterPro" id="IPR023679">
    <property type="entry name" value="UPF0761_bac"/>
</dbReference>
<dbReference type="InterPro" id="IPR017039">
    <property type="entry name" value="Virul_fac_BrkB"/>
</dbReference>
<dbReference type="NCBIfam" id="NF002457">
    <property type="entry name" value="PRK01637.1"/>
    <property type="match status" value="1"/>
</dbReference>
<dbReference type="NCBIfam" id="TIGR00765">
    <property type="entry name" value="yihY_not_rbn"/>
    <property type="match status" value="1"/>
</dbReference>
<dbReference type="PANTHER" id="PTHR30213">
    <property type="entry name" value="INNER MEMBRANE PROTEIN YHJD"/>
    <property type="match status" value="1"/>
</dbReference>
<dbReference type="PANTHER" id="PTHR30213:SF0">
    <property type="entry name" value="UPF0761 MEMBRANE PROTEIN YIHY"/>
    <property type="match status" value="1"/>
</dbReference>
<dbReference type="Pfam" id="PF03631">
    <property type="entry name" value="Virul_fac_BrkB"/>
    <property type="match status" value="1"/>
</dbReference>
<dbReference type="PIRSF" id="PIRSF035875">
    <property type="entry name" value="RNase_BN"/>
    <property type="match status" value="1"/>
</dbReference>
<gene>
    <name type="ordered locus">Sbal195_0319</name>
</gene>
<protein>
    <recommendedName>
        <fullName evidence="1">UPF0761 membrane protein Sbal195_0319</fullName>
    </recommendedName>
</protein>
<name>Y319_SHEB9</name>
<organism>
    <name type="scientific">Shewanella baltica (strain OS195)</name>
    <dbReference type="NCBI Taxonomy" id="399599"/>
    <lineage>
        <taxon>Bacteria</taxon>
        <taxon>Pseudomonadati</taxon>
        <taxon>Pseudomonadota</taxon>
        <taxon>Gammaproteobacteria</taxon>
        <taxon>Alteromonadales</taxon>
        <taxon>Shewanellaceae</taxon>
        <taxon>Shewanella</taxon>
    </lineage>
</organism>
<comment type="subcellular location">
    <subcellularLocation>
        <location evidence="1">Cell inner membrane</location>
        <topology evidence="1">Multi-pass membrane protein</topology>
    </subcellularLocation>
</comment>
<comment type="similarity">
    <text evidence="1">Belongs to the UPF0761 family.</text>
</comment>
<feature type="chain" id="PRO_1000082950" description="UPF0761 membrane protein Sbal195_0319">
    <location>
        <begin position="1"/>
        <end position="323"/>
    </location>
</feature>
<feature type="transmembrane region" description="Helical" evidence="1">
    <location>
        <begin position="4"/>
        <end position="24"/>
    </location>
</feature>
<feature type="transmembrane region" description="Helical" evidence="1">
    <location>
        <begin position="45"/>
        <end position="65"/>
    </location>
</feature>
<feature type="transmembrane region" description="Helical" evidence="1">
    <location>
        <begin position="102"/>
        <end position="122"/>
    </location>
</feature>
<feature type="transmembrane region" description="Helical" evidence="1">
    <location>
        <begin position="137"/>
        <end position="157"/>
    </location>
</feature>
<feature type="transmembrane region" description="Helical" evidence="1">
    <location>
        <begin position="182"/>
        <end position="202"/>
    </location>
</feature>
<feature type="transmembrane region" description="Helical" evidence="1">
    <location>
        <begin position="213"/>
        <end position="233"/>
    </location>
</feature>
<feature type="transmembrane region" description="Helical" evidence="1">
    <location>
        <begin position="247"/>
        <end position="267"/>
    </location>
</feature>
<proteinExistence type="inferred from homology"/>
<sequence>MTKKIELAQIRVLFLGIWHFLLHLRRRLVEDQINIRAGHLAYVTLLSLVPMVAVTMSMLSAFPVFKGIRGQIEGFVYENFLPAAGDTVQVYINEFVGNASKGTAVGIAALVVVAIMLISAIDKSLNNIWRTKEKRSVVVAFSMYWMVLTLGPVLVGASLVASSYVISLKVFEAEALSGMLPIFIARLPMLFSVAAFLLLYMVVPNQKVKFLHALLGAIVAALLFELGKKGFALYVTQFPSYEAIYGALATIPIVFVWVYLSWMIVLLGAEITAAMPEYLDYESSSDDETALNAKPLADASQGDSSSVLTSAEVTALKAVAKSE</sequence>